<accession>Q9KLQ5</accession>
<feature type="chain" id="PRO_0000092367" description="Fe(3+) ions import ATP-binding protein FbpC">
    <location>
        <begin position="1"/>
        <end position="351"/>
    </location>
</feature>
<feature type="domain" description="ABC transporter" evidence="1">
    <location>
        <begin position="7"/>
        <end position="237"/>
    </location>
</feature>
<feature type="binding site" evidence="1">
    <location>
        <begin position="39"/>
        <end position="46"/>
    </location>
    <ligand>
        <name>ATP</name>
        <dbReference type="ChEBI" id="CHEBI:30616"/>
    </ligand>
</feature>
<dbReference type="EC" id="7.2.2.7" evidence="1"/>
<dbReference type="EMBL" id="AE003853">
    <property type="protein sequence ID" value="AAF96587.1"/>
    <property type="molecule type" value="Genomic_DNA"/>
</dbReference>
<dbReference type="PIR" id="A82429">
    <property type="entry name" value="A82429"/>
</dbReference>
<dbReference type="RefSeq" id="NP_233075.1">
    <property type="nucleotide sequence ID" value="NC_002506.1"/>
</dbReference>
<dbReference type="RefSeq" id="WP_000414891.1">
    <property type="nucleotide sequence ID" value="NZ_LT906615.1"/>
</dbReference>
<dbReference type="SMR" id="Q9KLQ5"/>
<dbReference type="STRING" id="243277.VC_A0687"/>
<dbReference type="TCDB" id="3.A.1.20.2">
    <property type="family name" value="the atp-binding cassette (abc) superfamily"/>
</dbReference>
<dbReference type="DNASU" id="2612164"/>
<dbReference type="EnsemblBacteria" id="AAF96587">
    <property type="protein sequence ID" value="AAF96587"/>
    <property type="gene ID" value="VC_A0687"/>
</dbReference>
<dbReference type="KEGG" id="vch:VC_A0687"/>
<dbReference type="PATRIC" id="fig|243277.26.peg.3312"/>
<dbReference type="eggNOG" id="COG3842">
    <property type="taxonomic scope" value="Bacteria"/>
</dbReference>
<dbReference type="HOGENOM" id="CLU_000604_1_1_6"/>
<dbReference type="Proteomes" id="UP000000584">
    <property type="component" value="Chromosome 2"/>
</dbReference>
<dbReference type="GO" id="GO:0043190">
    <property type="term" value="C:ATP-binding cassette (ABC) transporter complex"/>
    <property type="evidence" value="ECO:0007669"/>
    <property type="project" value="InterPro"/>
</dbReference>
<dbReference type="GO" id="GO:0005886">
    <property type="term" value="C:plasma membrane"/>
    <property type="evidence" value="ECO:0000318"/>
    <property type="project" value="GO_Central"/>
</dbReference>
<dbReference type="GO" id="GO:0015408">
    <property type="term" value="F:ABC-type ferric iron transporter activity"/>
    <property type="evidence" value="ECO:0007669"/>
    <property type="project" value="UniProtKB-EC"/>
</dbReference>
<dbReference type="GO" id="GO:0005524">
    <property type="term" value="F:ATP binding"/>
    <property type="evidence" value="ECO:0007669"/>
    <property type="project" value="UniProtKB-KW"/>
</dbReference>
<dbReference type="GO" id="GO:0016887">
    <property type="term" value="F:ATP hydrolysis activity"/>
    <property type="evidence" value="ECO:0007669"/>
    <property type="project" value="InterPro"/>
</dbReference>
<dbReference type="GO" id="GO:0022857">
    <property type="term" value="F:transmembrane transporter activity"/>
    <property type="evidence" value="ECO:0000318"/>
    <property type="project" value="GO_Central"/>
</dbReference>
<dbReference type="GO" id="GO:0055085">
    <property type="term" value="P:transmembrane transport"/>
    <property type="evidence" value="ECO:0000318"/>
    <property type="project" value="GO_Central"/>
</dbReference>
<dbReference type="FunFam" id="3.40.50.300:FF:000425">
    <property type="entry name" value="Probable ABC transporter, ATP-binding subunit"/>
    <property type="match status" value="1"/>
</dbReference>
<dbReference type="Gene3D" id="2.40.50.100">
    <property type="match status" value="1"/>
</dbReference>
<dbReference type="Gene3D" id="3.40.50.300">
    <property type="entry name" value="P-loop containing nucleotide triphosphate hydrolases"/>
    <property type="match status" value="1"/>
</dbReference>
<dbReference type="InterPro" id="IPR003593">
    <property type="entry name" value="AAA+_ATPase"/>
</dbReference>
<dbReference type="InterPro" id="IPR050093">
    <property type="entry name" value="ABC_SmlMolc_Importer"/>
</dbReference>
<dbReference type="InterPro" id="IPR003439">
    <property type="entry name" value="ABC_transporter-like_ATP-bd"/>
</dbReference>
<dbReference type="InterPro" id="IPR017871">
    <property type="entry name" value="ABC_transporter-like_CS"/>
</dbReference>
<dbReference type="InterPro" id="IPR008995">
    <property type="entry name" value="Mo/tungstate-bd_C_term_dom"/>
</dbReference>
<dbReference type="InterPro" id="IPR027417">
    <property type="entry name" value="P-loop_NTPase"/>
</dbReference>
<dbReference type="InterPro" id="IPR013611">
    <property type="entry name" value="Transp-assoc_OB_typ2"/>
</dbReference>
<dbReference type="NCBIfam" id="NF008513">
    <property type="entry name" value="PRK11432.1"/>
    <property type="match status" value="1"/>
</dbReference>
<dbReference type="PANTHER" id="PTHR42781">
    <property type="entry name" value="SPERMIDINE/PUTRESCINE IMPORT ATP-BINDING PROTEIN POTA"/>
    <property type="match status" value="1"/>
</dbReference>
<dbReference type="PANTHER" id="PTHR42781:SF4">
    <property type="entry name" value="SPERMIDINE_PUTRESCINE IMPORT ATP-BINDING PROTEIN POTA"/>
    <property type="match status" value="1"/>
</dbReference>
<dbReference type="Pfam" id="PF00005">
    <property type="entry name" value="ABC_tran"/>
    <property type="match status" value="1"/>
</dbReference>
<dbReference type="Pfam" id="PF08402">
    <property type="entry name" value="TOBE_2"/>
    <property type="match status" value="1"/>
</dbReference>
<dbReference type="SMART" id="SM00382">
    <property type="entry name" value="AAA"/>
    <property type="match status" value="1"/>
</dbReference>
<dbReference type="SUPFAM" id="SSF50331">
    <property type="entry name" value="MOP-like"/>
    <property type="match status" value="1"/>
</dbReference>
<dbReference type="SUPFAM" id="SSF52540">
    <property type="entry name" value="P-loop containing nucleoside triphosphate hydrolases"/>
    <property type="match status" value="1"/>
</dbReference>
<dbReference type="PROSITE" id="PS00211">
    <property type="entry name" value="ABC_TRANSPORTER_1"/>
    <property type="match status" value="1"/>
</dbReference>
<dbReference type="PROSITE" id="PS50893">
    <property type="entry name" value="ABC_TRANSPORTER_2"/>
    <property type="match status" value="1"/>
</dbReference>
<dbReference type="PROSITE" id="PS51242">
    <property type="entry name" value="FBPC"/>
    <property type="match status" value="1"/>
</dbReference>
<reference key="1">
    <citation type="journal article" date="2000" name="Nature">
        <title>DNA sequence of both chromosomes of the cholera pathogen Vibrio cholerae.</title>
        <authorList>
            <person name="Heidelberg J.F."/>
            <person name="Eisen J.A."/>
            <person name="Nelson W.C."/>
            <person name="Clayton R.A."/>
            <person name="Gwinn M.L."/>
            <person name="Dodson R.J."/>
            <person name="Haft D.H."/>
            <person name="Hickey E.K."/>
            <person name="Peterson J.D."/>
            <person name="Umayam L.A."/>
            <person name="Gill S.R."/>
            <person name="Nelson K.E."/>
            <person name="Read T.D."/>
            <person name="Tettelin H."/>
            <person name="Richardson D.L."/>
            <person name="Ermolaeva M.D."/>
            <person name="Vamathevan J.J."/>
            <person name="Bass S."/>
            <person name="Qin H."/>
            <person name="Dragoi I."/>
            <person name="Sellers P."/>
            <person name="McDonald L.A."/>
            <person name="Utterback T.R."/>
            <person name="Fleischmann R.D."/>
            <person name="Nierman W.C."/>
            <person name="White O."/>
            <person name="Salzberg S.L."/>
            <person name="Smith H.O."/>
            <person name="Colwell R.R."/>
            <person name="Mekalanos J.J."/>
            <person name="Venter J.C."/>
            <person name="Fraser C.M."/>
        </authorList>
    </citation>
    <scope>NUCLEOTIDE SEQUENCE [LARGE SCALE GENOMIC DNA]</scope>
    <source>
        <strain>ATCC 39315 / El Tor Inaba N16961</strain>
    </source>
</reference>
<organism>
    <name type="scientific">Vibrio cholerae serotype O1 (strain ATCC 39315 / El Tor Inaba N16961)</name>
    <dbReference type="NCBI Taxonomy" id="243277"/>
    <lineage>
        <taxon>Bacteria</taxon>
        <taxon>Pseudomonadati</taxon>
        <taxon>Pseudomonadota</taxon>
        <taxon>Gammaproteobacteria</taxon>
        <taxon>Vibrionales</taxon>
        <taxon>Vibrionaceae</taxon>
        <taxon>Vibrio</taxon>
    </lineage>
</organism>
<sequence>MEKQNFVVLKNICKRFGSNTVIGNLDLEIKKGSLVTLLGPSGCGKTTVLRLVAGLEKPTSGQIFIDGEDVTERSIQQRDICMVFQSYALFPHMSLYENVAYGLKMLKLPSEEVRQRVDEALKIVDLEGMGERYVDQISGGQQQRVALARALVLKPKVLLFDEPLSNLDANLRRSMRETIRELQQRFDITSLYVTHDQAEAFAVSDTVIVMKQGDIMQIGTPQELYKAPKSMFMANFMGEANMFQGHFDGQQIHINGYAIDADLEVTRDKPNGEYQIGVRPEAITLHTQGSESQACQILKSAYMGSMYEVTVKWHDQELLLQLNSAQFNHTLTQHAYVVFNPRGLFLLPYAE</sequence>
<gene>
    <name evidence="1" type="primary">fbpC</name>
    <name type="ordered locus">VC_A0687</name>
</gene>
<evidence type="ECO:0000255" key="1">
    <source>
        <dbReference type="HAMAP-Rule" id="MF_01706"/>
    </source>
</evidence>
<proteinExistence type="inferred from homology"/>
<keyword id="KW-0067">ATP-binding</keyword>
<keyword id="KW-0997">Cell inner membrane</keyword>
<keyword id="KW-1003">Cell membrane</keyword>
<keyword id="KW-0406">Ion transport</keyword>
<keyword id="KW-0408">Iron</keyword>
<keyword id="KW-0410">Iron transport</keyword>
<keyword id="KW-0472">Membrane</keyword>
<keyword id="KW-0547">Nucleotide-binding</keyword>
<keyword id="KW-1185">Reference proteome</keyword>
<keyword id="KW-1278">Translocase</keyword>
<keyword id="KW-0813">Transport</keyword>
<comment type="function">
    <text evidence="1">Part of the ABC transporter complex FbpABC involved in Fe(3+) ions import. Responsible for energy coupling to the transport system.</text>
</comment>
<comment type="catalytic activity">
    <reaction evidence="1">
        <text>Fe(3+)(out) + ATP + H2O = Fe(3+)(in) + ADP + phosphate + H(+)</text>
        <dbReference type="Rhea" id="RHEA:12332"/>
        <dbReference type="ChEBI" id="CHEBI:15377"/>
        <dbReference type="ChEBI" id="CHEBI:15378"/>
        <dbReference type="ChEBI" id="CHEBI:29034"/>
        <dbReference type="ChEBI" id="CHEBI:30616"/>
        <dbReference type="ChEBI" id="CHEBI:43474"/>
        <dbReference type="ChEBI" id="CHEBI:456216"/>
        <dbReference type="EC" id="7.2.2.7"/>
    </reaction>
</comment>
<comment type="subunit">
    <text evidence="1">The complex is composed of two ATP-binding proteins (FbpC), two transmembrane proteins (FbpB) and a solute-binding protein (FbpA).</text>
</comment>
<comment type="subcellular location">
    <subcellularLocation>
        <location evidence="1">Cell inner membrane</location>
        <topology evidence="1">Peripheral membrane protein</topology>
    </subcellularLocation>
</comment>
<comment type="similarity">
    <text evidence="1">Belongs to the ABC transporter superfamily. Fe(3+) ion importer (TC 3.A.1.10) family.</text>
</comment>
<name>FBPC_VIBCH</name>
<protein>
    <recommendedName>
        <fullName evidence="1">Fe(3+) ions import ATP-binding protein FbpC</fullName>
        <ecNumber evidence="1">7.2.2.7</ecNumber>
    </recommendedName>
</protein>